<reference key="1">
    <citation type="submission" date="2007-06" db="EMBL/GenBank/DDBJ databases">
        <title>Complete sequence of Methanococcus aeolicus Nankai-3.</title>
        <authorList>
            <consortium name="US DOE Joint Genome Institute"/>
            <person name="Copeland A."/>
            <person name="Lucas S."/>
            <person name="Lapidus A."/>
            <person name="Barry K."/>
            <person name="Glavina del Rio T."/>
            <person name="Dalin E."/>
            <person name="Tice H."/>
            <person name="Pitluck S."/>
            <person name="Chain P."/>
            <person name="Malfatti S."/>
            <person name="Shin M."/>
            <person name="Vergez L."/>
            <person name="Schmutz J."/>
            <person name="Larimer F."/>
            <person name="Land M."/>
            <person name="Hauser L."/>
            <person name="Kyrpides N."/>
            <person name="Lykidis A."/>
            <person name="Sieprawska-Lupa M."/>
            <person name="Whitman W.B."/>
            <person name="Richardson P."/>
        </authorList>
    </citation>
    <scope>NUCLEOTIDE SEQUENCE [LARGE SCALE GENOMIC DNA]</scope>
    <source>
        <strain>ATCC BAA-1280 / DSM 17508 / OCM 812 / Nankai-3</strain>
    </source>
</reference>
<accession>A6UWM0</accession>
<sequence>MKKIGTELLKRGFAKMVKHGVVMDVTNPEQARIAEDAGAAAVMALERVPADIRAEGGVSRMSDPEMILEIKDEVSIPVMAKARIGHFVEAQALESLGIDMVDESEVLTPADEIHHIDKNAFDIPFVCGARNLGEALRRIDEGAAMIRTKGEAGTGDVIEAVKHMRAVNEGIAKVVGYYEMGCDRELVQMARNELKVPMDLVYEVAELKRLPVVNFAAGGIATPADAALMMQLGCDGVFVGSGIFKSGNPEERARAIVEATYNYDKPDVIAEVSKNLGEAMVGINVDAIPEKELLAKRGI</sequence>
<protein>
    <recommendedName>
        <fullName evidence="1">Pyridoxal 5'-phosphate synthase subunit PdxS</fullName>
        <shortName evidence="1">PLP synthase subunit PdxS</shortName>
        <ecNumber evidence="1">4.3.3.6</ecNumber>
    </recommendedName>
    <alternativeName>
        <fullName evidence="1">Pdx1</fullName>
    </alternativeName>
</protein>
<keyword id="KW-0456">Lyase</keyword>
<keyword id="KW-0663">Pyridoxal phosphate</keyword>
<keyword id="KW-0704">Schiff base</keyword>
<feature type="chain" id="PRO_1000070382" description="Pyridoxal 5'-phosphate synthase subunit PdxS">
    <location>
        <begin position="1"/>
        <end position="299"/>
    </location>
</feature>
<feature type="active site" description="Schiff-base intermediate with D-ribose 5-phosphate" evidence="1">
    <location>
        <position position="81"/>
    </location>
</feature>
<feature type="binding site" evidence="1">
    <location>
        <position position="24"/>
    </location>
    <ligand>
        <name>D-ribose 5-phosphate</name>
        <dbReference type="ChEBI" id="CHEBI:78346"/>
    </ligand>
</feature>
<feature type="binding site" evidence="1">
    <location>
        <position position="153"/>
    </location>
    <ligand>
        <name>D-ribose 5-phosphate</name>
        <dbReference type="ChEBI" id="CHEBI:78346"/>
    </ligand>
</feature>
<feature type="binding site" evidence="1">
    <location>
        <position position="165"/>
    </location>
    <ligand>
        <name>D-glyceraldehyde 3-phosphate</name>
        <dbReference type="ChEBI" id="CHEBI:59776"/>
    </ligand>
</feature>
<feature type="binding site" evidence="1">
    <location>
        <position position="219"/>
    </location>
    <ligand>
        <name>D-ribose 5-phosphate</name>
        <dbReference type="ChEBI" id="CHEBI:78346"/>
    </ligand>
</feature>
<feature type="binding site" evidence="1">
    <location>
        <begin position="240"/>
        <end position="241"/>
    </location>
    <ligand>
        <name>D-ribose 5-phosphate</name>
        <dbReference type="ChEBI" id="CHEBI:78346"/>
    </ligand>
</feature>
<dbReference type="EC" id="4.3.3.6" evidence="1"/>
<dbReference type="EMBL" id="CP000743">
    <property type="protein sequence ID" value="ABR56892.1"/>
    <property type="molecule type" value="Genomic_DNA"/>
</dbReference>
<dbReference type="RefSeq" id="WP_011974024.1">
    <property type="nucleotide sequence ID" value="NC_009635.1"/>
</dbReference>
<dbReference type="SMR" id="A6UWM0"/>
<dbReference type="STRING" id="419665.Maeo_1316"/>
<dbReference type="GeneID" id="5327242"/>
<dbReference type="GeneID" id="75304794"/>
<dbReference type="KEGG" id="mae:Maeo_1316"/>
<dbReference type="eggNOG" id="arCOG04075">
    <property type="taxonomic scope" value="Archaea"/>
</dbReference>
<dbReference type="HOGENOM" id="CLU_055352_1_0_2"/>
<dbReference type="OrthoDB" id="6840at2157"/>
<dbReference type="UniPathway" id="UPA00245"/>
<dbReference type="Proteomes" id="UP000001106">
    <property type="component" value="Chromosome"/>
</dbReference>
<dbReference type="GO" id="GO:0036381">
    <property type="term" value="F:pyridoxal 5'-phosphate synthase (glutamine hydrolysing) activity"/>
    <property type="evidence" value="ECO:0007669"/>
    <property type="project" value="UniProtKB-UniRule"/>
</dbReference>
<dbReference type="GO" id="GO:0006520">
    <property type="term" value="P:amino acid metabolic process"/>
    <property type="evidence" value="ECO:0007669"/>
    <property type="project" value="TreeGrafter"/>
</dbReference>
<dbReference type="GO" id="GO:0042823">
    <property type="term" value="P:pyridoxal phosphate biosynthetic process"/>
    <property type="evidence" value="ECO:0007669"/>
    <property type="project" value="UniProtKB-UniRule"/>
</dbReference>
<dbReference type="GO" id="GO:0008615">
    <property type="term" value="P:pyridoxine biosynthetic process"/>
    <property type="evidence" value="ECO:0007669"/>
    <property type="project" value="TreeGrafter"/>
</dbReference>
<dbReference type="CDD" id="cd04727">
    <property type="entry name" value="pdxS"/>
    <property type="match status" value="1"/>
</dbReference>
<dbReference type="FunFam" id="3.20.20.70:FF:000001">
    <property type="entry name" value="Pyridoxine biosynthesis protein PDX1"/>
    <property type="match status" value="1"/>
</dbReference>
<dbReference type="Gene3D" id="3.20.20.70">
    <property type="entry name" value="Aldolase class I"/>
    <property type="match status" value="1"/>
</dbReference>
<dbReference type="HAMAP" id="MF_01824">
    <property type="entry name" value="PdxS"/>
    <property type="match status" value="1"/>
</dbReference>
<dbReference type="InterPro" id="IPR013785">
    <property type="entry name" value="Aldolase_TIM"/>
</dbReference>
<dbReference type="InterPro" id="IPR001852">
    <property type="entry name" value="PdxS/SNZ"/>
</dbReference>
<dbReference type="InterPro" id="IPR033755">
    <property type="entry name" value="PdxS/SNZ_N"/>
</dbReference>
<dbReference type="InterPro" id="IPR011060">
    <property type="entry name" value="RibuloseP-bd_barrel"/>
</dbReference>
<dbReference type="NCBIfam" id="NF003215">
    <property type="entry name" value="PRK04180.1"/>
    <property type="match status" value="1"/>
</dbReference>
<dbReference type="NCBIfam" id="TIGR00343">
    <property type="entry name" value="pyridoxal 5'-phosphate synthase lyase subunit PdxS"/>
    <property type="match status" value="1"/>
</dbReference>
<dbReference type="PANTHER" id="PTHR31829">
    <property type="entry name" value="PYRIDOXAL 5'-PHOSPHATE SYNTHASE SUBUNIT SNZ1-RELATED"/>
    <property type="match status" value="1"/>
</dbReference>
<dbReference type="PANTHER" id="PTHR31829:SF0">
    <property type="entry name" value="PYRIDOXAL 5'-PHOSPHATE SYNTHASE SUBUNIT SNZ1-RELATED"/>
    <property type="match status" value="1"/>
</dbReference>
<dbReference type="Pfam" id="PF01680">
    <property type="entry name" value="SOR_SNZ"/>
    <property type="match status" value="1"/>
</dbReference>
<dbReference type="PIRSF" id="PIRSF029271">
    <property type="entry name" value="Pdx1"/>
    <property type="match status" value="1"/>
</dbReference>
<dbReference type="SUPFAM" id="SSF51366">
    <property type="entry name" value="Ribulose-phoshate binding barrel"/>
    <property type="match status" value="1"/>
</dbReference>
<dbReference type="PROSITE" id="PS01235">
    <property type="entry name" value="PDXS_SNZ_1"/>
    <property type="match status" value="1"/>
</dbReference>
<dbReference type="PROSITE" id="PS51129">
    <property type="entry name" value="PDXS_SNZ_2"/>
    <property type="match status" value="1"/>
</dbReference>
<name>PDXS_META3</name>
<comment type="function">
    <text evidence="1">Catalyzes the formation of pyridoxal 5'-phosphate from ribose 5-phosphate (RBP), glyceraldehyde 3-phosphate (G3P) and ammonia. The ammonia is provided by the PdxT subunit. Can also use ribulose 5-phosphate and dihydroxyacetone phosphate as substrates, resulting from enzyme-catalyzed isomerization of RBP and G3P, respectively.</text>
</comment>
<comment type="catalytic activity">
    <reaction evidence="1">
        <text>aldehydo-D-ribose 5-phosphate + D-glyceraldehyde 3-phosphate + L-glutamine = pyridoxal 5'-phosphate + L-glutamate + phosphate + 3 H2O + H(+)</text>
        <dbReference type="Rhea" id="RHEA:31507"/>
        <dbReference type="ChEBI" id="CHEBI:15377"/>
        <dbReference type="ChEBI" id="CHEBI:15378"/>
        <dbReference type="ChEBI" id="CHEBI:29985"/>
        <dbReference type="ChEBI" id="CHEBI:43474"/>
        <dbReference type="ChEBI" id="CHEBI:58273"/>
        <dbReference type="ChEBI" id="CHEBI:58359"/>
        <dbReference type="ChEBI" id="CHEBI:59776"/>
        <dbReference type="ChEBI" id="CHEBI:597326"/>
        <dbReference type="EC" id="4.3.3.6"/>
    </reaction>
</comment>
<comment type="pathway">
    <text evidence="1">Cofactor biosynthesis; pyridoxal 5'-phosphate biosynthesis.</text>
</comment>
<comment type="subunit">
    <text evidence="1">In the presence of PdxT, forms a dodecamer of heterodimers.</text>
</comment>
<comment type="similarity">
    <text evidence="1">Belongs to the PdxS/SNZ family.</text>
</comment>
<gene>
    <name evidence="1" type="primary">pdxS</name>
    <name type="ordered locus">Maeo_1316</name>
</gene>
<proteinExistence type="inferred from homology"/>
<evidence type="ECO:0000255" key="1">
    <source>
        <dbReference type="HAMAP-Rule" id="MF_01824"/>
    </source>
</evidence>
<organism>
    <name type="scientific">Methanococcus aeolicus (strain ATCC BAA-1280 / DSM 17508 / OCM 812 / Nankai-3)</name>
    <dbReference type="NCBI Taxonomy" id="419665"/>
    <lineage>
        <taxon>Archaea</taxon>
        <taxon>Methanobacteriati</taxon>
        <taxon>Methanobacteriota</taxon>
        <taxon>Methanomada group</taxon>
        <taxon>Methanococci</taxon>
        <taxon>Methanococcales</taxon>
        <taxon>Methanococcaceae</taxon>
        <taxon>Methanococcus</taxon>
    </lineage>
</organism>